<organism>
    <name type="scientific">Photorhabdus laumondii subsp. laumondii (strain DSM 15139 / CIP 105565 / TT01)</name>
    <name type="common">Photorhabdus luminescens subsp. laumondii</name>
    <dbReference type="NCBI Taxonomy" id="243265"/>
    <lineage>
        <taxon>Bacteria</taxon>
        <taxon>Pseudomonadati</taxon>
        <taxon>Pseudomonadota</taxon>
        <taxon>Gammaproteobacteria</taxon>
        <taxon>Enterobacterales</taxon>
        <taxon>Morganellaceae</taxon>
        <taxon>Photorhabdus</taxon>
    </lineage>
</organism>
<protein>
    <recommendedName>
        <fullName evidence="1">Tryptophan--tRNA ligase</fullName>
        <ecNumber evidence="1">6.1.1.2</ecNumber>
    </recommendedName>
    <alternativeName>
        <fullName evidence="1">Tryptophanyl-tRNA synthetase</fullName>
        <shortName evidence="1">TrpRS</shortName>
    </alternativeName>
</protein>
<dbReference type="EC" id="6.1.1.2" evidence="1"/>
<dbReference type="EMBL" id="BX571859">
    <property type="protein sequence ID" value="CAE12379.1"/>
    <property type="molecule type" value="Genomic_DNA"/>
</dbReference>
<dbReference type="RefSeq" id="WP_011144490.1">
    <property type="nucleotide sequence ID" value="NC_005126.1"/>
</dbReference>
<dbReference type="SMR" id="Q7NA61"/>
<dbReference type="STRING" id="243265.plu0084"/>
<dbReference type="GeneID" id="48846385"/>
<dbReference type="KEGG" id="plu:plu0084"/>
<dbReference type="eggNOG" id="COG0180">
    <property type="taxonomic scope" value="Bacteria"/>
</dbReference>
<dbReference type="HOGENOM" id="CLU_029244_1_1_6"/>
<dbReference type="OrthoDB" id="9801042at2"/>
<dbReference type="Proteomes" id="UP000002514">
    <property type="component" value="Chromosome"/>
</dbReference>
<dbReference type="GO" id="GO:0005829">
    <property type="term" value="C:cytosol"/>
    <property type="evidence" value="ECO:0007669"/>
    <property type="project" value="TreeGrafter"/>
</dbReference>
<dbReference type="GO" id="GO:0005524">
    <property type="term" value="F:ATP binding"/>
    <property type="evidence" value="ECO:0007669"/>
    <property type="project" value="UniProtKB-UniRule"/>
</dbReference>
<dbReference type="GO" id="GO:0004830">
    <property type="term" value="F:tryptophan-tRNA ligase activity"/>
    <property type="evidence" value="ECO:0007669"/>
    <property type="project" value="UniProtKB-UniRule"/>
</dbReference>
<dbReference type="GO" id="GO:0006436">
    <property type="term" value="P:tryptophanyl-tRNA aminoacylation"/>
    <property type="evidence" value="ECO:0007669"/>
    <property type="project" value="UniProtKB-UniRule"/>
</dbReference>
<dbReference type="CDD" id="cd00806">
    <property type="entry name" value="TrpRS_core"/>
    <property type="match status" value="1"/>
</dbReference>
<dbReference type="FunFam" id="1.10.240.10:FF:000002">
    <property type="entry name" value="Tryptophan--tRNA ligase"/>
    <property type="match status" value="1"/>
</dbReference>
<dbReference type="FunFam" id="3.40.50.620:FF:000024">
    <property type="entry name" value="Tryptophan--tRNA ligase"/>
    <property type="match status" value="1"/>
</dbReference>
<dbReference type="Gene3D" id="3.40.50.620">
    <property type="entry name" value="HUPs"/>
    <property type="match status" value="1"/>
</dbReference>
<dbReference type="Gene3D" id="1.10.240.10">
    <property type="entry name" value="Tyrosyl-Transfer RNA Synthetase"/>
    <property type="match status" value="1"/>
</dbReference>
<dbReference type="HAMAP" id="MF_00140_B">
    <property type="entry name" value="Trp_tRNA_synth_B"/>
    <property type="match status" value="1"/>
</dbReference>
<dbReference type="InterPro" id="IPR001412">
    <property type="entry name" value="aa-tRNA-synth_I_CS"/>
</dbReference>
<dbReference type="InterPro" id="IPR002305">
    <property type="entry name" value="aa-tRNA-synth_Ic"/>
</dbReference>
<dbReference type="InterPro" id="IPR014729">
    <property type="entry name" value="Rossmann-like_a/b/a_fold"/>
</dbReference>
<dbReference type="InterPro" id="IPR002306">
    <property type="entry name" value="Trp-tRNA-ligase"/>
</dbReference>
<dbReference type="InterPro" id="IPR024109">
    <property type="entry name" value="Trp-tRNA-ligase_bac-type"/>
</dbReference>
<dbReference type="InterPro" id="IPR050203">
    <property type="entry name" value="Trp-tRNA_synthetase"/>
</dbReference>
<dbReference type="NCBIfam" id="TIGR00233">
    <property type="entry name" value="trpS"/>
    <property type="match status" value="1"/>
</dbReference>
<dbReference type="PANTHER" id="PTHR43766">
    <property type="entry name" value="TRYPTOPHAN--TRNA LIGASE, MITOCHONDRIAL"/>
    <property type="match status" value="1"/>
</dbReference>
<dbReference type="PANTHER" id="PTHR43766:SF1">
    <property type="entry name" value="TRYPTOPHAN--TRNA LIGASE, MITOCHONDRIAL"/>
    <property type="match status" value="1"/>
</dbReference>
<dbReference type="Pfam" id="PF00579">
    <property type="entry name" value="tRNA-synt_1b"/>
    <property type="match status" value="1"/>
</dbReference>
<dbReference type="PRINTS" id="PR01039">
    <property type="entry name" value="TRNASYNTHTRP"/>
</dbReference>
<dbReference type="SUPFAM" id="SSF52374">
    <property type="entry name" value="Nucleotidylyl transferase"/>
    <property type="match status" value="1"/>
</dbReference>
<dbReference type="PROSITE" id="PS00178">
    <property type="entry name" value="AA_TRNA_LIGASE_I"/>
    <property type="match status" value="1"/>
</dbReference>
<evidence type="ECO:0000255" key="1">
    <source>
        <dbReference type="HAMAP-Rule" id="MF_00140"/>
    </source>
</evidence>
<proteinExistence type="inferred from homology"/>
<accession>Q7NA61</accession>
<feature type="chain" id="PRO_0000136657" description="Tryptophan--tRNA ligase">
    <location>
        <begin position="1"/>
        <end position="345"/>
    </location>
</feature>
<feature type="short sequence motif" description="'HIGH' region" evidence="1">
    <location>
        <begin position="23"/>
        <end position="31"/>
    </location>
</feature>
<feature type="short sequence motif" description="'KMSKS' region" evidence="1">
    <location>
        <begin position="206"/>
        <end position="210"/>
    </location>
</feature>
<feature type="binding site" evidence="1">
    <location>
        <begin position="22"/>
        <end position="24"/>
    </location>
    <ligand>
        <name>ATP</name>
        <dbReference type="ChEBI" id="CHEBI:30616"/>
    </ligand>
</feature>
<feature type="binding site" evidence="1">
    <location>
        <begin position="30"/>
        <end position="31"/>
    </location>
    <ligand>
        <name>ATP</name>
        <dbReference type="ChEBI" id="CHEBI:30616"/>
    </ligand>
</feature>
<feature type="binding site" evidence="1">
    <location>
        <position position="146"/>
    </location>
    <ligand>
        <name>L-tryptophan</name>
        <dbReference type="ChEBI" id="CHEBI:57912"/>
    </ligand>
</feature>
<feature type="binding site" evidence="1">
    <location>
        <begin position="158"/>
        <end position="160"/>
    </location>
    <ligand>
        <name>ATP</name>
        <dbReference type="ChEBI" id="CHEBI:30616"/>
    </ligand>
</feature>
<feature type="binding site" evidence="1">
    <location>
        <position position="197"/>
    </location>
    <ligand>
        <name>ATP</name>
        <dbReference type="ChEBI" id="CHEBI:30616"/>
    </ligand>
</feature>
<feature type="binding site" evidence="1">
    <location>
        <begin position="206"/>
        <end position="210"/>
    </location>
    <ligand>
        <name>ATP</name>
        <dbReference type="ChEBI" id="CHEBI:30616"/>
    </ligand>
</feature>
<sequence length="345" mass="38678">MNEPTVSETLNSQKPIVFSGAQPSGELTIGNYMGALRQWVKMQDDYDCIYCIVDQHAITVRQDPKELRKRTLDTLALYLACGIDPEKSTIFVQSHVPQHAQLSWILNCYTYFGELSRMTQFKDKSARHAENINAGLFDYPVLMTADILVYQTNQVPVGIDQKQHLELSRDIAQRFNAIYGNIFAVPEPFIPTGGARVMALQDPEKKMSKSDDNRNNVIALLEDPKSAAKKIKRAVTDSEEPPRVRYDLEQKPGVSNLLDLLAGVTGKTIPELEAEFEGQMYGHLKSAVADAVSGMLTELQERFHYFRNDEILLNKIMAEGAAKAKARAQITLDKVYEAVGFIAHP</sequence>
<comment type="function">
    <text evidence="1">Catalyzes the attachment of tryptophan to tRNA(Trp).</text>
</comment>
<comment type="catalytic activity">
    <reaction evidence="1">
        <text>tRNA(Trp) + L-tryptophan + ATP = L-tryptophyl-tRNA(Trp) + AMP + diphosphate + H(+)</text>
        <dbReference type="Rhea" id="RHEA:24080"/>
        <dbReference type="Rhea" id="RHEA-COMP:9671"/>
        <dbReference type="Rhea" id="RHEA-COMP:9705"/>
        <dbReference type="ChEBI" id="CHEBI:15378"/>
        <dbReference type="ChEBI" id="CHEBI:30616"/>
        <dbReference type="ChEBI" id="CHEBI:33019"/>
        <dbReference type="ChEBI" id="CHEBI:57912"/>
        <dbReference type="ChEBI" id="CHEBI:78442"/>
        <dbReference type="ChEBI" id="CHEBI:78535"/>
        <dbReference type="ChEBI" id="CHEBI:456215"/>
        <dbReference type="EC" id="6.1.1.2"/>
    </reaction>
</comment>
<comment type="subunit">
    <text evidence="1">Homodimer.</text>
</comment>
<comment type="subcellular location">
    <subcellularLocation>
        <location evidence="1">Cytoplasm</location>
    </subcellularLocation>
</comment>
<comment type="similarity">
    <text evidence="1">Belongs to the class-I aminoacyl-tRNA synthetase family.</text>
</comment>
<name>SYW_PHOLL</name>
<reference key="1">
    <citation type="journal article" date="2003" name="Nat. Biotechnol.">
        <title>The genome sequence of the entomopathogenic bacterium Photorhabdus luminescens.</title>
        <authorList>
            <person name="Duchaud E."/>
            <person name="Rusniok C."/>
            <person name="Frangeul L."/>
            <person name="Buchrieser C."/>
            <person name="Givaudan A."/>
            <person name="Taourit S."/>
            <person name="Bocs S."/>
            <person name="Boursaux-Eude C."/>
            <person name="Chandler M."/>
            <person name="Charles J.-F."/>
            <person name="Dassa E."/>
            <person name="Derose R."/>
            <person name="Derzelle S."/>
            <person name="Freyssinet G."/>
            <person name="Gaudriault S."/>
            <person name="Medigue C."/>
            <person name="Lanois A."/>
            <person name="Powell K."/>
            <person name="Siguier P."/>
            <person name="Vincent R."/>
            <person name="Wingate V."/>
            <person name="Zouine M."/>
            <person name="Glaser P."/>
            <person name="Boemare N."/>
            <person name="Danchin A."/>
            <person name="Kunst F."/>
        </authorList>
    </citation>
    <scope>NUCLEOTIDE SEQUENCE [LARGE SCALE GENOMIC DNA]</scope>
    <source>
        <strain>DSM 15139 / CIP 105565 / TT01</strain>
    </source>
</reference>
<keyword id="KW-0030">Aminoacyl-tRNA synthetase</keyword>
<keyword id="KW-0067">ATP-binding</keyword>
<keyword id="KW-0963">Cytoplasm</keyword>
<keyword id="KW-0436">Ligase</keyword>
<keyword id="KW-0547">Nucleotide-binding</keyword>
<keyword id="KW-0648">Protein biosynthesis</keyword>
<keyword id="KW-1185">Reference proteome</keyword>
<gene>
    <name evidence="1" type="primary">trpS</name>
    <name type="ordered locus">plu0084</name>
</gene>